<organism>
    <name type="scientific">Homo sapiens</name>
    <name type="common">Human</name>
    <dbReference type="NCBI Taxonomy" id="9606"/>
    <lineage>
        <taxon>Eukaryota</taxon>
        <taxon>Metazoa</taxon>
        <taxon>Chordata</taxon>
        <taxon>Craniata</taxon>
        <taxon>Vertebrata</taxon>
        <taxon>Euteleostomi</taxon>
        <taxon>Mammalia</taxon>
        <taxon>Eutheria</taxon>
        <taxon>Euarchontoglires</taxon>
        <taxon>Primates</taxon>
        <taxon>Haplorrhini</taxon>
        <taxon>Catarrhini</taxon>
        <taxon>Hominidae</taxon>
        <taxon>Homo</taxon>
    </lineage>
</organism>
<gene>
    <name type="primary">CMIP</name>
    <name type="synonym">KIAA1694</name>
    <name type="synonym">TCMIP</name>
</gene>
<evidence type="ECO:0000256" key="1">
    <source>
        <dbReference type="SAM" id="MobiDB-lite"/>
    </source>
</evidence>
<evidence type="ECO:0000269" key="2">
    <source>
    </source>
</evidence>
<evidence type="ECO:0000269" key="3">
    <source>
    </source>
</evidence>
<evidence type="ECO:0000269" key="4">
    <source>
    </source>
</evidence>
<evidence type="ECO:0000303" key="5">
    <source>
    </source>
</evidence>
<evidence type="ECO:0000303" key="6">
    <source>
    </source>
</evidence>
<evidence type="ECO:0007744" key="7">
    <source>
    </source>
</evidence>
<evidence type="ECO:0007744" key="8">
    <source>
    </source>
</evidence>
<evidence type="ECO:0007744" key="9">
    <source>
    </source>
</evidence>
<evidence type="ECO:0007744" key="10">
    <source>
    </source>
</evidence>
<reference key="1">
    <citation type="journal article" date="2003" name="J. Exp. Med.">
        <title>Truncation of C-mip (Tc-mip), a new proximal signaling protein, induces c-maf Th2 transcription factor and cytoskeleton reorganization.</title>
        <authorList>
            <person name="Grimbert P."/>
            <person name="Valanciute A."/>
            <person name="Audard V."/>
            <person name="Pawlak A."/>
            <person name="Le gouvelo S."/>
            <person name="Lang P."/>
            <person name="Niaudet P."/>
            <person name="Bensman A."/>
            <person name="Guellaen G."/>
            <person name="Sahali D."/>
        </authorList>
    </citation>
    <scope>NUCLEOTIDE SEQUENCE [MRNA] (ISOFORM 2)</scope>
    <scope>FUNCTION</scope>
    <scope>SUBCELLULAR LOCATION</scope>
    <scope>ALTERNATIVE SPLICING</scope>
    <scope>TISSUE SPECIFICITY</scope>
    <scope>DEVELOPMENTAL STAGE</scope>
</reference>
<reference key="2">
    <citation type="journal article" date="2004" name="Nature">
        <title>The sequence and analysis of duplication-rich human chromosome 16.</title>
        <authorList>
            <person name="Martin J."/>
            <person name="Han C."/>
            <person name="Gordon L.A."/>
            <person name="Terry A."/>
            <person name="Prabhakar S."/>
            <person name="She X."/>
            <person name="Xie G."/>
            <person name="Hellsten U."/>
            <person name="Chan Y.M."/>
            <person name="Altherr M."/>
            <person name="Couronne O."/>
            <person name="Aerts A."/>
            <person name="Bajorek E."/>
            <person name="Black S."/>
            <person name="Blumer H."/>
            <person name="Branscomb E."/>
            <person name="Brown N.C."/>
            <person name="Bruno W.J."/>
            <person name="Buckingham J.M."/>
            <person name="Callen D.F."/>
            <person name="Campbell C.S."/>
            <person name="Campbell M.L."/>
            <person name="Campbell E.W."/>
            <person name="Caoile C."/>
            <person name="Challacombe J.F."/>
            <person name="Chasteen L.A."/>
            <person name="Chertkov O."/>
            <person name="Chi H.C."/>
            <person name="Christensen M."/>
            <person name="Clark L.M."/>
            <person name="Cohn J.D."/>
            <person name="Denys M."/>
            <person name="Detter J.C."/>
            <person name="Dickson M."/>
            <person name="Dimitrijevic-Bussod M."/>
            <person name="Escobar J."/>
            <person name="Fawcett J.J."/>
            <person name="Flowers D."/>
            <person name="Fotopulos D."/>
            <person name="Glavina T."/>
            <person name="Gomez M."/>
            <person name="Gonzales E."/>
            <person name="Goodstein D."/>
            <person name="Goodwin L.A."/>
            <person name="Grady D.L."/>
            <person name="Grigoriev I."/>
            <person name="Groza M."/>
            <person name="Hammon N."/>
            <person name="Hawkins T."/>
            <person name="Haydu L."/>
            <person name="Hildebrand C.E."/>
            <person name="Huang W."/>
            <person name="Israni S."/>
            <person name="Jett J."/>
            <person name="Jewett P.B."/>
            <person name="Kadner K."/>
            <person name="Kimball H."/>
            <person name="Kobayashi A."/>
            <person name="Krawczyk M.-C."/>
            <person name="Leyba T."/>
            <person name="Longmire J.L."/>
            <person name="Lopez F."/>
            <person name="Lou Y."/>
            <person name="Lowry S."/>
            <person name="Ludeman T."/>
            <person name="Manohar C.F."/>
            <person name="Mark G.A."/>
            <person name="McMurray K.L."/>
            <person name="Meincke L.J."/>
            <person name="Morgan J."/>
            <person name="Moyzis R.K."/>
            <person name="Mundt M.O."/>
            <person name="Munk A.C."/>
            <person name="Nandkeshwar R.D."/>
            <person name="Pitluck S."/>
            <person name="Pollard M."/>
            <person name="Predki P."/>
            <person name="Parson-Quintana B."/>
            <person name="Ramirez L."/>
            <person name="Rash S."/>
            <person name="Retterer J."/>
            <person name="Ricke D.O."/>
            <person name="Robinson D.L."/>
            <person name="Rodriguez A."/>
            <person name="Salamov A."/>
            <person name="Saunders E.H."/>
            <person name="Scott D."/>
            <person name="Shough T."/>
            <person name="Stallings R.L."/>
            <person name="Stalvey M."/>
            <person name="Sutherland R.D."/>
            <person name="Tapia R."/>
            <person name="Tesmer J.G."/>
            <person name="Thayer N."/>
            <person name="Thompson L.S."/>
            <person name="Tice H."/>
            <person name="Torney D.C."/>
            <person name="Tran-Gyamfi M."/>
            <person name="Tsai M."/>
            <person name="Ulanovsky L.E."/>
            <person name="Ustaszewska A."/>
            <person name="Vo N."/>
            <person name="White P.S."/>
            <person name="Williams A.L."/>
            <person name="Wills P.L."/>
            <person name="Wu J.-R."/>
            <person name="Wu K."/>
            <person name="Yang J."/>
            <person name="DeJong P."/>
            <person name="Bruce D."/>
            <person name="Doggett N.A."/>
            <person name="Deaven L."/>
            <person name="Schmutz J."/>
            <person name="Grimwood J."/>
            <person name="Richardson P."/>
            <person name="Rokhsar D.S."/>
            <person name="Eichler E.E."/>
            <person name="Gilna P."/>
            <person name="Lucas S.M."/>
            <person name="Myers R.M."/>
            <person name="Rubin E.M."/>
            <person name="Pennacchio L.A."/>
        </authorList>
    </citation>
    <scope>NUCLEOTIDE SEQUENCE [LARGE SCALE GENOMIC DNA]</scope>
</reference>
<reference key="3">
    <citation type="journal article" date="2004" name="Genome Res.">
        <title>The status, quality, and expansion of the NIH full-length cDNA project: the Mammalian Gene Collection (MGC).</title>
        <authorList>
            <consortium name="The MGC Project Team"/>
        </authorList>
    </citation>
    <scope>NUCLEOTIDE SEQUENCE [LARGE SCALE MRNA] (ISOFORM 3)</scope>
    <source>
        <tissue>Brain</tissue>
    </source>
</reference>
<reference key="4">
    <citation type="journal article" date="2000" name="DNA Res.">
        <title>Prediction of the coding sequences of unidentified human genes. XIX. The complete sequences of 100 new cDNA clones from brain which code for large proteins in vitro.</title>
        <authorList>
            <person name="Nagase T."/>
            <person name="Kikuno R."/>
            <person name="Hattori A."/>
            <person name="Kondo Y."/>
            <person name="Okumura K."/>
            <person name="Ohara O."/>
        </authorList>
    </citation>
    <scope>NUCLEOTIDE SEQUENCE [LARGE SCALE MRNA] OF 17-773 (ISOFORM 1)</scope>
    <source>
        <tissue>Brain</tissue>
    </source>
</reference>
<reference key="5">
    <citation type="journal article" date="2004" name="Mol. Immunol.">
        <title>The Filamin-A is a partner of Tc-mip, a new adapter protein involved in c-maf-dependent Th2 signaling pathway.</title>
        <authorList>
            <person name="Grimbert P."/>
            <person name="Valanciute A."/>
            <person name="Audard V."/>
            <person name="Lang P."/>
            <person name="Guellaen G."/>
            <person name="Sahali D."/>
        </authorList>
    </citation>
    <scope>FUNCTION</scope>
    <scope>INTERACTION WITH FLNA</scope>
    <scope>SUBCELLULAR LOCATION</scope>
</reference>
<reference key="6">
    <citation type="journal article" date="2008" name="J. Proteome Res.">
        <title>Combining protein-based IMAC, peptide-based IMAC, and MudPIT for efficient phosphoproteomic analysis.</title>
        <authorList>
            <person name="Cantin G.T."/>
            <person name="Yi W."/>
            <person name="Lu B."/>
            <person name="Park S.K."/>
            <person name="Xu T."/>
            <person name="Lee J.-D."/>
            <person name="Yates J.R. III"/>
        </authorList>
    </citation>
    <scope>PHOSPHORYLATION [LARGE SCALE ANALYSIS] AT SER-377</scope>
    <scope>IDENTIFICATION BY MASS SPECTROMETRY [LARGE SCALE ANALYSIS]</scope>
    <source>
        <tissue>Cervix carcinoma</tissue>
    </source>
</reference>
<reference key="7">
    <citation type="journal article" date="2008" name="Proc. Natl. Acad. Sci. U.S.A.">
        <title>A quantitative atlas of mitotic phosphorylation.</title>
        <authorList>
            <person name="Dephoure N."/>
            <person name="Zhou C."/>
            <person name="Villen J."/>
            <person name="Beausoleil S.A."/>
            <person name="Bakalarski C.E."/>
            <person name="Elledge S.J."/>
            <person name="Gygi S.P."/>
        </authorList>
    </citation>
    <scope>PHOSPHORYLATION [LARGE SCALE ANALYSIS] AT SER-349</scope>
    <scope>IDENTIFICATION BY MASS SPECTROMETRY [LARGE SCALE ANALYSIS]</scope>
    <source>
        <tissue>Cervix carcinoma</tissue>
    </source>
</reference>
<reference key="8">
    <citation type="journal article" date="2011" name="BMC Syst. Biol.">
        <title>Initial characterization of the human central proteome.</title>
        <authorList>
            <person name="Burkard T.R."/>
            <person name="Planyavsky M."/>
            <person name="Kaupe I."/>
            <person name="Breitwieser F.P."/>
            <person name="Buerckstuemmer T."/>
            <person name="Bennett K.L."/>
            <person name="Superti-Furga G."/>
            <person name="Colinge J."/>
        </authorList>
    </citation>
    <scope>IDENTIFICATION BY MASS SPECTROMETRY [LARGE SCALE ANALYSIS]</scope>
</reference>
<reference key="9">
    <citation type="journal article" date="2013" name="J. Proteome Res.">
        <title>Toward a comprehensive characterization of a human cancer cell phosphoproteome.</title>
        <authorList>
            <person name="Zhou H."/>
            <person name="Di Palma S."/>
            <person name="Preisinger C."/>
            <person name="Peng M."/>
            <person name="Polat A.N."/>
            <person name="Heck A.J."/>
            <person name="Mohammed S."/>
        </authorList>
    </citation>
    <scope>PHOSPHORYLATION [LARGE SCALE ANALYSIS] AT SER-377 AND SER-382</scope>
    <scope>IDENTIFICATION BY MASS SPECTROMETRY [LARGE SCALE ANALYSIS]</scope>
    <source>
        <tissue>Cervix carcinoma</tissue>
        <tissue>Erythroleukemia</tissue>
    </source>
</reference>
<reference key="10">
    <citation type="journal article" date="2014" name="J. Proteomics">
        <title>An enzyme assisted RP-RPLC approach for in-depth analysis of human liver phosphoproteome.</title>
        <authorList>
            <person name="Bian Y."/>
            <person name="Song C."/>
            <person name="Cheng K."/>
            <person name="Dong M."/>
            <person name="Wang F."/>
            <person name="Huang J."/>
            <person name="Sun D."/>
            <person name="Wang L."/>
            <person name="Ye M."/>
            <person name="Zou H."/>
        </authorList>
    </citation>
    <scope>PHOSPHORYLATION [LARGE SCALE ANALYSIS] AT SER-660</scope>
    <scope>IDENTIFICATION BY MASS SPECTROMETRY [LARGE SCALE ANALYSIS]</scope>
    <source>
        <tissue>Liver</tissue>
    </source>
</reference>
<comment type="function">
    <text evidence="2 3">Plays a role in T-cell signaling pathway. Isoform 2 may play a role in T-helper 2 (Th2) signaling pathway and seems to represent the first proximal signaling protein that links T-cell receptor-mediated signal to the activation of c-Maf Th2 specific factor.</text>
</comment>
<comment type="subunit">
    <text evidence="3">Interacts with FLNA.</text>
</comment>
<comment type="interaction">
    <interactant intactId="EBI-7689652">
        <id>Q8IY22</id>
    </interactant>
    <interactant intactId="EBI-79464">
        <id>P27986</id>
        <label>PIK3R1</label>
    </interactant>
    <organismsDiffer>false</organismsDiffer>
    <experiments>2</experiments>
</comment>
<comment type="interaction">
    <interactant intactId="EBI-7689652">
        <id>Q8IY22</id>
    </interactant>
    <interactant intactId="EBI-645227">
        <id>Q80SY4</id>
        <label>Mib1</label>
    </interactant>
    <organismsDiffer>true</organismsDiffer>
    <experiments>2</experiments>
</comment>
<comment type="interaction">
    <interactant intactId="EBI-12149877">
        <id>Q8IY22-3</id>
    </interactant>
    <interactant intactId="EBI-2130429">
        <id>Q9BYV2</id>
        <label>TRIM54</label>
    </interactant>
    <organismsDiffer>false</organismsDiffer>
    <experiments>3</experiments>
</comment>
<comment type="interaction">
    <interactant intactId="EBI-12149877">
        <id>Q8IY22-3</id>
    </interactant>
    <interactant intactId="EBI-746981">
        <id>Q969E8</id>
        <label>TSR2</label>
    </interactant>
    <organismsDiffer>false</organismsDiffer>
    <experiments>3</experiments>
</comment>
<comment type="interaction">
    <interactant intactId="EBI-12149877">
        <id>Q8IY22-3</id>
    </interactant>
    <interactant intactId="EBI-747993">
        <id>Q9NQZ6</id>
        <label>ZC4H2</label>
    </interactant>
    <organismsDiffer>false</organismsDiffer>
    <experiments>3</experiments>
</comment>
<comment type="subcellular location">
    <subcellularLocation>
        <location evidence="2">Nucleus</location>
    </subcellularLocation>
    <subcellularLocation>
        <location evidence="2">Cytoplasm</location>
    </subcellularLocation>
    <text evidence="2 4">Isoform 2 is translocated to the nucleus and is specifically recruited during minimal change nephrotic syndrome (MCNS) (PubMed:12939343, PubMed:15616553). Detected in nuclear and cytoplasmic compartments during MCNS relapse (PubMed:12939343, PubMed:15616553). Expressed in cytoplasm only during MCNS remission and absent in normal patients (PubMed:12939343).</text>
</comment>
<comment type="alternative products">
    <event type="alternative splicing"/>
    <isoform>
        <id>Q8IY22-1</id>
        <name>1</name>
        <name>C-Mip</name>
        <sequence type="displayed"/>
    </isoform>
    <isoform>
        <id>Q8IY22-2</id>
        <name>2</name>
        <name>Tc-Mip</name>
        <sequence type="described" ref="VSP_031109 VSP_031110"/>
    </isoform>
    <isoform>
        <id>Q8IY22-3</id>
        <name>3</name>
        <sequence type="described" ref="VSP_031108 VSP_031111"/>
    </isoform>
</comment>
<comment type="tissue specificity">
    <text evidence="2">Isoform 1 is expressed in peripheral blood mononuclear cells and kidney. Lower expression in brain and liver. Expression is down-regulated in activated cells. Isoform 2 is expressed in lymphocyte precursors, however, expression shuts down during maturation and differentiation in thymus and fetal liver.</text>
</comment>
<comment type="developmental stage">
    <text evidence="2">Expressed in fetal liver.</text>
</comment>
<protein>
    <recommendedName>
        <fullName>C-Maf-inducing protein</fullName>
        <shortName>c-Mip</shortName>
    </recommendedName>
    <alternativeName>
        <fullName>Truncated c-Maf-inducing protein</fullName>
        <shortName>Tc-Mip</shortName>
    </alternativeName>
</protein>
<keyword id="KW-0025">Alternative splicing</keyword>
<keyword id="KW-0963">Cytoplasm</keyword>
<keyword id="KW-0433">Leucine-rich repeat</keyword>
<keyword id="KW-0539">Nucleus</keyword>
<keyword id="KW-0597">Phosphoprotein</keyword>
<keyword id="KW-1267">Proteomics identification</keyword>
<keyword id="KW-1185">Reference proteome</keyword>
<keyword id="KW-0677">Repeat</keyword>
<dbReference type="EMBL" id="AY172689">
    <property type="protein sequence ID" value="AAO17720.1"/>
    <property type="molecule type" value="mRNA"/>
</dbReference>
<dbReference type="EMBL" id="AC092135">
    <property type="status" value="NOT_ANNOTATED_CDS"/>
    <property type="molecule type" value="Genomic_DNA"/>
</dbReference>
<dbReference type="EMBL" id="AC092139">
    <property type="status" value="NOT_ANNOTATED_CDS"/>
    <property type="molecule type" value="Genomic_DNA"/>
</dbReference>
<dbReference type="EMBL" id="AC099480">
    <property type="status" value="NOT_ANNOTATED_CDS"/>
    <property type="molecule type" value="Genomic_DNA"/>
</dbReference>
<dbReference type="EMBL" id="AC099524">
    <property type="status" value="NOT_ANNOTATED_CDS"/>
    <property type="molecule type" value="Genomic_DNA"/>
</dbReference>
<dbReference type="EMBL" id="BC038113">
    <property type="protein sequence ID" value="AAH38113.1"/>
    <property type="molecule type" value="mRNA"/>
</dbReference>
<dbReference type="EMBL" id="AB051481">
    <property type="protein sequence ID" value="BAB21785.1"/>
    <property type="molecule type" value="mRNA"/>
</dbReference>
<dbReference type="CCDS" id="CCDS54044.1">
    <molecule id="Q8IY22-1"/>
</dbReference>
<dbReference type="CCDS" id="CCDS54045.1">
    <molecule id="Q8IY22-2"/>
</dbReference>
<dbReference type="RefSeq" id="NP_085132.1">
    <molecule id="Q8IY22-2"/>
    <property type="nucleotide sequence ID" value="NM_030629.3"/>
</dbReference>
<dbReference type="RefSeq" id="NP_938204.2">
    <molecule id="Q8IY22-1"/>
    <property type="nucleotide sequence ID" value="NM_198390.3"/>
</dbReference>
<dbReference type="SMR" id="Q8IY22"/>
<dbReference type="BioGRID" id="123313">
    <property type="interactions" value="33"/>
</dbReference>
<dbReference type="FunCoup" id="Q8IY22">
    <property type="interactions" value="1480"/>
</dbReference>
<dbReference type="IntAct" id="Q8IY22">
    <property type="interactions" value="20"/>
</dbReference>
<dbReference type="MINT" id="Q8IY22"/>
<dbReference type="STRING" id="9606.ENSP00000446100"/>
<dbReference type="GlyCosmos" id="Q8IY22">
    <property type="glycosylation" value="1 site, 1 glycan"/>
</dbReference>
<dbReference type="GlyGen" id="Q8IY22">
    <property type="glycosylation" value="1 site, 1 O-linked glycan (1 site)"/>
</dbReference>
<dbReference type="iPTMnet" id="Q8IY22"/>
<dbReference type="PhosphoSitePlus" id="Q8IY22"/>
<dbReference type="SwissPalm" id="Q8IY22"/>
<dbReference type="BioMuta" id="CMIP"/>
<dbReference type="DMDM" id="353526341"/>
<dbReference type="jPOST" id="Q8IY22"/>
<dbReference type="MassIVE" id="Q8IY22"/>
<dbReference type="PaxDb" id="9606-ENSP00000446100"/>
<dbReference type="PeptideAtlas" id="Q8IY22"/>
<dbReference type="ProteomicsDB" id="71089">
    <molecule id="Q8IY22-1"/>
</dbReference>
<dbReference type="ProteomicsDB" id="71090">
    <molecule id="Q8IY22-2"/>
</dbReference>
<dbReference type="ProteomicsDB" id="71091">
    <molecule id="Q8IY22-3"/>
</dbReference>
<dbReference type="Pumba" id="Q8IY22"/>
<dbReference type="Antibodypedia" id="44799">
    <property type="antibodies" value="85 antibodies from 21 providers"/>
</dbReference>
<dbReference type="DNASU" id="80790"/>
<dbReference type="Ensembl" id="ENST00000398040.8">
    <molecule id="Q8IY22-3"/>
    <property type="protein sequence ID" value="ENSP00000381120.4"/>
    <property type="gene ID" value="ENSG00000153815.18"/>
</dbReference>
<dbReference type="Ensembl" id="ENST00000537098.8">
    <molecule id="Q8IY22-1"/>
    <property type="protein sequence ID" value="ENSP00000446100.2"/>
    <property type="gene ID" value="ENSG00000153815.18"/>
</dbReference>
<dbReference type="Ensembl" id="ENST00000539778.6">
    <molecule id="Q8IY22-2"/>
    <property type="protein sequence ID" value="ENSP00000440401.2"/>
    <property type="gene ID" value="ENSG00000153815.18"/>
</dbReference>
<dbReference type="GeneID" id="80790"/>
<dbReference type="KEGG" id="hsa:80790"/>
<dbReference type="MANE-Select" id="ENST00000537098.8">
    <property type="protein sequence ID" value="ENSP00000446100.2"/>
    <property type="RefSeq nucleotide sequence ID" value="NM_198390.3"/>
    <property type="RefSeq protein sequence ID" value="NP_938204.2"/>
</dbReference>
<dbReference type="UCSC" id="uc002fgp.5">
    <molecule id="Q8IY22-1"/>
    <property type="organism name" value="human"/>
</dbReference>
<dbReference type="AGR" id="HGNC:24319"/>
<dbReference type="CTD" id="80790"/>
<dbReference type="DisGeNET" id="80790"/>
<dbReference type="GeneCards" id="CMIP"/>
<dbReference type="HGNC" id="HGNC:24319">
    <property type="gene designation" value="CMIP"/>
</dbReference>
<dbReference type="HPA" id="ENSG00000153815">
    <property type="expression patterns" value="Low tissue specificity"/>
</dbReference>
<dbReference type="MalaCards" id="CMIP"/>
<dbReference type="MIM" id="610112">
    <property type="type" value="gene"/>
</dbReference>
<dbReference type="neXtProt" id="NX_Q8IY22"/>
<dbReference type="OpenTargets" id="ENSG00000153815"/>
<dbReference type="VEuPathDB" id="HostDB:ENSG00000153815"/>
<dbReference type="eggNOG" id="ENOG502QRSV">
    <property type="taxonomic scope" value="Eukaryota"/>
</dbReference>
<dbReference type="GeneTree" id="ENSGT00390000018220"/>
<dbReference type="InParanoid" id="Q8IY22"/>
<dbReference type="OMA" id="DECIYQT"/>
<dbReference type="OrthoDB" id="10056090at2759"/>
<dbReference type="PAN-GO" id="Q8IY22">
    <property type="GO annotations" value="2 GO annotations based on evolutionary models"/>
</dbReference>
<dbReference type="PhylomeDB" id="Q8IY22"/>
<dbReference type="TreeFam" id="TF328575"/>
<dbReference type="PathwayCommons" id="Q8IY22"/>
<dbReference type="SignaLink" id="Q8IY22"/>
<dbReference type="BioGRID-ORCS" id="80790">
    <property type="hits" value="131 hits in 1164 CRISPR screens"/>
</dbReference>
<dbReference type="ChiTaRS" id="CMIP">
    <property type="organism name" value="human"/>
</dbReference>
<dbReference type="GenomeRNAi" id="80790"/>
<dbReference type="Pharos" id="Q8IY22">
    <property type="development level" value="Tbio"/>
</dbReference>
<dbReference type="PRO" id="PR:Q8IY22"/>
<dbReference type="Proteomes" id="UP000005640">
    <property type="component" value="Chromosome 16"/>
</dbReference>
<dbReference type="RNAct" id="Q8IY22">
    <property type="molecule type" value="protein"/>
</dbReference>
<dbReference type="Bgee" id="ENSG00000153815">
    <property type="expression patterns" value="Expressed in kidney epithelium and 175 other cell types or tissues"/>
</dbReference>
<dbReference type="ExpressionAtlas" id="Q8IY22">
    <property type="expression patterns" value="baseline and differential"/>
</dbReference>
<dbReference type="GO" id="GO:0005829">
    <property type="term" value="C:cytosol"/>
    <property type="evidence" value="ECO:0000314"/>
    <property type="project" value="HPA"/>
</dbReference>
<dbReference type="GO" id="GO:0005654">
    <property type="term" value="C:nucleoplasm"/>
    <property type="evidence" value="ECO:0000314"/>
    <property type="project" value="HPA"/>
</dbReference>
<dbReference type="GO" id="GO:0001701">
    <property type="term" value="P:in utero embryonic development"/>
    <property type="evidence" value="ECO:0007669"/>
    <property type="project" value="Ensembl"/>
</dbReference>
<dbReference type="FunFam" id="3.80.10.10:FF:000030">
    <property type="entry name" value="C-Maf-inducing protein-like protein"/>
    <property type="match status" value="1"/>
</dbReference>
<dbReference type="Gene3D" id="3.80.10.10">
    <property type="entry name" value="Ribonuclease Inhibitor"/>
    <property type="match status" value="1"/>
</dbReference>
<dbReference type="InterPro" id="IPR052813">
    <property type="entry name" value="CMIP"/>
</dbReference>
<dbReference type="InterPro" id="IPR032675">
    <property type="entry name" value="LRR_dom_sf"/>
</dbReference>
<dbReference type="InterPro" id="IPR056429">
    <property type="entry name" value="PH_CMIP"/>
</dbReference>
<dbReference type="PANTHER" id="PTHR25480:SF0">
    <property type="entry name" value="C-MAF-INDUCING PROTEIN"/>
    <property type="match status" value="1"/>
</dbReference>
<dbReference type="PANTHER" id="PTHR25480">
    <property type="entry name" value="LEUCINE-RICH REPEAT-CONTAINING PROTEIN 73"/>
    <property type="match status" value="1"/>
</dbReference>
<dbReference type="Pfam" id="PF23066">
    <property type="entry name" value="PH_21"/>
    <property type="match status" value="1"/>
</dbReference>
<dbReference type="SUPFAM" id="SSF50729">
    <property type="entry name" value="PH domain-like"/>
    <property type="match status" value="1"/>
</dbReference>
<dbReference type="SUPFAM" id="SSF52047">
    <property type="entry name" value="RNI-like"/>
    <property type="match status" value="1"/>
</dbReference>
<accession>Q8IY22</accession>
<accession>Q9C0G9</accession>
<feature type="chain" id="PRO_0000317628" description="C-Maf-inducing protein">
    <location>
        <begin position="1"/>
        <end position="773"/>
    </location>
</feature>
<feature type="domain" description="PH">
    <location>
        <begin position="54"/>
        <end position="163"/>
    </location>
</feature>
<feature type="repeat" description="LRR 1">
    <location>
        <begin position="663"/>
        <end position="686"/>
    </location>
</feature>
<feature type="repeat" description="LRR 2">
    <location>
        <begin position="687"/>
        <end position="707"/>
    </location>
</feature>
<feature type="repeat" description="LRR 3">
    <location>
        <begin position="712"/>
        <end position="732"/>
    </location>
</feature>
<feature type="repeat" description="LRR 4">
    <location>
        <begin position="736"/>
        <end position="756"/>
    </location>
</feature>
<feature type="region of interest" description="Disordered" evidence="1">
    <location>
        <begin position="1"/>
        <end position="30"/>
    </location>
</feature>
<feature type="modified residue" description="Phosphoserine" evidence="8">
    <location>
        <position position="349"/>
    </location>
</feature>
<feature type="modified residue" description="Phosphoserine" evidence="7 9">
    <location>
        <position position="377"/>
    </location>
</feature>
<feature type="modified residue" description="Phosphoserine" evidence="9">
    <location>
        <position position="382"/>
    </location>
</feature>
<feature type="modified residue" description="Phosphoserine" evidence="10">
    <location>
        <position position="660"/>
    </location>
</feature>
<feature type="splice variant" id="VSP_031108" description="In isoform 3." evidence="6">
    <location>
        <begin position="1"/>
        <end position="153"/>
    </location>
</feature>
<feature type="splice variant" id="VSP_031109" description="In isoform 2." evidence="5">
    <location>
        <begin position="1"/>
        <end position="94"/>
    </location>
</feature>
<feature type="splice variant" id="VSP_031110" description="In isoform 2." evidence="5">
    <original>SLASAT</original>
    <variation>MGQAAE</variation>
    <location>
        <begin position="95"/>
        <end position="100"/>
    </location>
</feature>
<feature type="splice variant" id="VSP_031111" description="In isoform 3." evidence="6">
    <original>HSLQWK</original>
    <variation>MASVAQ</variation>
    <location>
        <begin position="154"/>
        <end position="159"/>
    </location>
</feature>
<proteinExistence type="evidence at protein level"/>
<sequence length="773" mass="86331">MDVTSSSGGGGDPRQIEETKPLLGGDVSAPEGTKMGAVPCRRALLLCNGMRYKLLQEGDIQVCVIRHPRTFLSKILTSKFLRRWEPHHLTLADNSLASATPTGYMENSVSYSAIEDVQLLSWENAPKYCLQLTIPGGTVLLQAANSYLRDQWFHSLQWKKKIYKYKKVLSNPSRWEVVLKEIRTLVDMALTSPLQDDSINQAPLEIVSKLLSENTNLTTQEHENIIVAIAPLLENNHPPPDLCEFFCKHCRERPRSMVVIEVFTPVVQRILKHNMDFGKCPRLRLFTQEYILALNELNAGMEVVKKFIQSMHGPTGHCPHPRVLPNLVAVCLAAIYSCYEEFINSRDNSPSLKEIRNGCQQPCDRKPTLPLRLLHPSPDLVSQEATLSEARLKSVVVASSEIHVEVERTSTAKPALTASAGNDSEPNLIDCLMVSPACSTMSIELGPQADRTLGCYVEILKLLSDYDDWRPSLASLLQPIPFPKEALAHEKFTKELKYVIQRFAEDPRQEVHSCLLSVRAGKDGWFQLYSPGGVACDDDGELFASMVHILMGSCYKTKKFLLSLAENKLGPCMLLALRGNQTMVEILCLMLEYNIIDNNDTQLQIISTLESTDVGKRMYEQLCDRQRELKELQRKGGPTRLTLPSKSTDADLARLLSSGSFGNLENLSLAFTNVTSACAEHLIKLPSLKQLNLWSTQFGDAGLRLLSEHLTMLQVLNLCETPVTDAGLLALSSMKSLCSLNMNSTKLSADTYEDLKAKLPNLKEVDVRYTEAW</sequence>
<name>CMIP_HUMAN</name>